<accession>A5UZG3</accession>
<reference key="1">
    <citation type="submission" date="2007-04" db="EMBL/GenBank/DDBJ databases">
        <title>Complete sequence of Roseiflexus sp. RS-1.</title>
        <authorList>
            <consortium name="US DOE Joint Genome Institute"/>
            <person name="Copeland A."/>
            <person name="Lucas S."/>
            <person name="Lapidus A."/>
            <person name="Barry K."/>
            <person name="Detter J.C."/>
            <person name="Glavina del Rio T."/>
            <person name="Hammon N."/>
            <person name="Israni S."/>
            <person name="Dalin E."/>
            <person name="Tice H."/>
            <person name="Pitluck S."/>
            <person name="Chertkov O."/>
            <person name="Brettin T."/>
            <person name="Bruce D."/>
            <person name="Han C."/>
            <person name="Schmutz J."/>
            <person name="Larimer F."/>
            <person name="Land M."/>
            <person name="Hauser L."/>
            <person name="Kyrpides N."/>
            <person name="Mikhailova N."/>
            <person name="Bryant D.A."/>
            <person name="Richardson P."/>
        </authorList>
    </citation>
    <scope>NUCLEOTIDE SEQUENCE [LARGE SCALE GENOMIC DNA]</scope>
    <source>
        <strain>RS-1</strain>
    </source>
</reference>
<proteinExistence type="inferred from homology"/>
<evidence type="ECO:0000255" key="1">
    <source>
        <dbReference type="HAMAP-Rule" id="MF_00303"/>
    </source>
</evidence>
<evidence type="ECO:0000256" key="2">
    <source>
        <dbReference type="SAM" id="MobiDB-lite"/>
    </source>
</evidence>
<protein>
    <recommendedName>
        <fullName evidence="1">Trigger factor</fullName>
        <shortName evidence="1">TF</shortName>
        <ecNumber evidence="1">5.2.1.8</ecNumber>
    </recommendedName>
    <alternativeName>
        <fullName evidence="1">PPIase</fullName>
    </alternativeName>
</protein>
<sequence length="539" mass="60117">MKVTTEKKPRSILELTVELDKQQIEKALDRAARRMSQKYNIPGFRKGKAPRFIVENYFGREALLEEASDDLIQKAFQDALKQEGIEPYAQAHLTDVNLTEAPYRFTVEVPVAPTVVLPDYRAIHVPLEIEEVTDETVNHAMEIRRDRHVVLRALDEPRPAQPGDQLTVQIETFVDGEPLNPRAEGEDIPQSTLVLDPERIVPGLYEALVGVSPNTMVDVTVRMSDDHENERVRGRDVRFVVNVLDVQERLLPEWDELPALENFEGTLDELREKTRNELIEAARKNAEDDVFVEYVRQVIAATTFDLPDALIVREADSILREREAEFERYGISAEQIYAAQGKKRDDLIEELKPVAEERAKRGLVLREIAKAEGLAPDESEIAREVEDIVASMEEERRDSARTLLETELRPFVVAGIVDRKLRRRILAIATGDPSFEQAASPEAASEPESADGGEAQTVDTHIDSAPVDDVSTKQAASPEAASEPESADGGEAQTVDTHINSAPVDDVSTETPIVSQEENGESVENQSVVDVATPEARTE</sequence>
<comment type="function">
    <text evidence="1">Involved in protein export. Acts as a chaperone by maintaining the newly synthesized protein in an open conformation. Functions as a peptidyl-prolyl cis-trans isomerase.</text>
</comment>
<comment type="catalytic activity">
    <reaction evidence="1">
        <text>[protein]-peptidylproline (omega=180) = [protein]-peptidylproline (omega=0)</text>
        <dbReference type="Rhea" id="RHEA:16237"/>
        <dbReference type="Rhea" id="RHEA-COMP:10747"/>
        <dbReference type="Rhea" id="RHEA-COMP:10748"/>
        <dbReference type="ChEBI" id="CHEBI:83833"/>
        <dbReference type="ChEBI" id="CHEBI:83834"/>
        <dbReference type="EC" id="5.2.1.8"/>
    </reaction>
</comment>
<comment type="subcellular location">
    <subcellularLocation>
        <location>Cytoplasm</location>
    </subcellularLocation>
    <text evidence="1">About half TF is bound to the ribosome near the polypeptide exit tunnel while the other half is free in the cytoplasm.</text>
</comment>
<comment type="domain">
    <text evidence="1">Consists of 3 domains; the N-terminus binds the ribosome, the middle domain has PPIase activity, while the C-terminus has intrinsic chaperone activity on its own.</text>
</comment>
<comment type="similarity">
    <text evidence="1">Belongs to the FKBP-type PPIase family. Tig subfamily.</text>
</comment>
<keyword id="KW-0131">Cell cycle</keyword>
<keyword id="KW-0132">Cell division</keyword>
<keyword id="KW-0143">Chaperone</keyword>
<keyword id="KW-0963">Cytoplasm</keyword>
<keyword id="KW-0413">Isomerase</keyword>
<keyword id="KW-0697">Rotamase</keyword>
<feature type="chain" id="PRO_1000022748" description="Trigger factor">
    <location>
        <begin position="1"/>
        <end position="539"/>
    </location>
</feature>
<feature type="domain" description="PPIase FKBP-type" evidence="1">
    <location>
        <begin position="163"/>
        <end position="252"/>
    </location>
</feature>
<feature type="region of interest" description="Disordered" evidence="2">
    <location>
        <begin position="434"/>
        <end position="539"/>
    </location>
</feature>
<feature type="compositionally biased region" description="Low complexity" evidence="2">
    <location>
        <begin position="434"/>
        <end position="447"/>
    </location>
</feature>
<feature type="compositionally biased region" description="Low complexity" evidence="2">
    <location>
        <begin position="475"/>
        <end position="484"/>
    </location>
</feature>
<feature type="compositionally biased region" description="Polar residues" evidence="2">
    <location>
        <begin position="509"/>
        <end position="528"/>
    </location>
</feature>
<gene>
    <name evidence="1" type="primary">tig</name>
    <name type="ordered locus">RoseRS_3661</name>
</gene>
<dbReference type="EC" id="5.2.1.8" evidence="1"/>
<dbReference type="EMBL" id="CP000686">
    <property type="protein sequence ID" value="ABQ92016.1"/>
    <property type="molecule type" value="Genomic_DNA"/>
</dbReference>
<dbReference type="RefSeq" id="WP_011958358.1">
    <property type="nucleotide sequence ID" value="NC_009523.1"/>
</dbReference>
<dbReference type="SMR" id="A5UZG3"/>
<dbReference type="STRING" id="357808.RoseRS_3661"/>
<dbReference type="KEGG" id="rrs:RoseRS_3661"/>
<dbReference type="eggNOG" id="COG0544">
    <property type="taxonomic scope" value="Bacteria"/>
</dbReference>
<dbReference type="HOGENOM" id="CLU_033058_3_2_0"/>
<dbReference type="OrthoDB" id="9767721at2"/>
<dbReference type="Proteomes" id="UP000006554">
    <property type="component" value="Chromosome"/>
</dbReference>
<dbReference type="GO" id="GO:0005737">
    <property type="term" value="C:cytoplasm"/>
    <property type="evidence" value="ECO:0007669"/>
    <property type="project" value="UniProtKB-SubCell"/>
</dbReference>
<dbReference type="GO" id="GO:0003755">
    <property type="term" value="F:peptidyl-prolyl cis-trans isomerase activity"/>
    <property type="evidence" value="ECO:0007669"/>
    <property type="project" value="UniProtKB-UniRule"/>
</dbReference>
<dbReference type="GO" id="GO:0044183">
    <property type="term" value="F:protein folding chaperone"/>
    <property type="evidence" value="ECO:0007669"/>
    <property type="project" value="TreeGrafter"/>
</dbReference>
<dbReference type="GO" id="GO:0043022">
    <property type="term" value="F:ribosome binding"/>
    <property type="evidence" value="ECO:0007669"/>
    <property type="project" value="TreeGrafter"/>
</dbReference>
<dbReference type="GO" id="GO:0051083">
    <property type="term" value="P:'de novo' cotranslational protein folding"/>
    <property type="evidence" value="ECO:0007669"/>
    <property type="project" value="TreeGrafter"/>
</dbReference>
<dbReference type="GO" id="GO:0051301">
    <property type="term" value="P:cell division"/>
    <property type="evidence" value="ECO:0007669"/>
    <property type="project" value="UniProtKB-KW"/>
</dbReference>
<dbReference type="GO" id="GO:0061077">
    <property type="term" value="P:chaperone-mediated protein folding"/>
    <property type="evidence" value="ECO:0007669"/>
    <property type="project" value="TreeGrafter"/>
</dbReference>
<dbReference type="GO" id="GO:0015031">
    <property type="term" value="P:protein transport"/>
    <property type="evidence" value="ECO:0007669"/>
    <property type="project" value="UniProtKB-UniRule"/>
</dbReference>
<dbReference type="GO" id="GO:0043335">
    <property type="term" value="P:protein unfolding"/>
    <property type="evidence" value="ECO:0007669"/>
    <property type="project" value="TreeGrafter"/>
</dbReference>
<dbReference type="Gene3D" id="3.10.50.40">
    <property type="match status" value="1"/>
</dbReference>
<dbReference type="Gene3D" id="3.30.70.1050">
    <property type="entry name" value="Trigger factor ribosome-binding domain"/>
    <property type="match status" value="1"/>
</dbReference>
<dbReference type="Gene3D" id="1.10.3120.10">
    <property type="entry name" value="Trigger factor, C-terminal domain"/>
    <property type="match status" value="1"/>
</dbReference>
<dbReference type="HAMAP" id="MF_00303">
    <property type="entry name" value="Trigger_factor_Tig"/>
    <property type="match status" value="1"/>
</dbReference>
<dbReference type="InterPro" id="IPR046357">
    <property type="entry name" value="PPIase_dom_sf"/>
</dbReference>
<dbReference type="InterPro" id="IPR005215">
    <property type="entry name" value="Trig_fac"/>
</dbReference>
<dbReference type="InterPro" id="IPR008880">
    <property type="entry name" value="Trigger_fac_C"/>
</dbReference>
<dbReference type="InterPro" id="IPR037041">
    <property type="entry name" value="Trigger_fac_C_sf"/>
</dbReference>
<dbReference type="InterPro" id="IPR008881">
    <property type="entry name" value="Trigger_fac_ribosome-bd_bac"/>
</dbReference>
<dbReference type="InterPro" id="IPR036611">
    <property type="entry name" value="Trigger_fac_ribosome-bd_sf"/>
</dbReference>
<dbReference type="InterPro" id="IPR027304">
    <property type="entry name" value="Trigger_fact/SurA_dom_sf"/>
</dbReference>
<dbReference type="NCBIfam" id="TIGR00115">
    <property type="entry name" value="tig"/>
    <property type="match status" value="1"/>
</dbReference>
<dbReference type="PANTHER" id="PTHR30560">
    <property type="entry name" value="TRIGGER FACTOR CHAPERONE AND PEPTIDYL-PROLYL CIS/TRANS ISOMERASE"/>
    <property type="match status" value="1"/>
</dbReference>
<dbReference type="PANTHER" id="PTHR30560:SF3">
    <property type="entry name" value="TRIGGER FACTOR-LIKE PROTEIN TIG, CHLOROPLASTIC"/>
    <property type="match status" value="1"/>
</dbReference>
<dbReference type="Pfam" id="PF05698">
    <property type="entry name" value="Trigger_C"/>
    <property type="match status" value="1"/>
</dbReference>
<dbReference type="Pfam" id="PF05697">
    <property type="entry name" value="Trigger_N"/>
    <property type="match status" value="1"/>
</dbReference>
<dbReference type="SUPFAM" id="SSF54534">
    <property type="entry name" value="FKBP-like"/>
    <property type="match status" value="1"/>
</dbReference>
<dbReference type="SUPFAM" id="SSF109998">
    <property type="entry name" value="Triger factor/SurA peptide-binding domain-like"/>
    <property type="match status" value="1"/>
</dbReference>
<dbReference type="SUPFAM" id="SSF102735">
    <property type="entry name" value="Trigger factor ribosome-binding domain"/>
    <property type="match status" value="1"/>
</dbReference>
<name>TIG_ROSS1</name>
<organism>
    <name type="scientific">Roseiflexus sp. (strain RS-1)</name>
    <dbReference type="NCBI Taxonomy" id="357808"/>
    <lineage>
        <taxon>Bacteria</taxon>
        <taxon>Bacillati</taxon>
        <taxon>Chloroflexota</taxon>
        <taxon>Chloroflexia</taxon>
        <taxon>Chloroflexales</taxon>
        <taxon>Roseiflexineae</taxon>
        <taxon>Roseiflexaceae</taxon>
        <taxon>Roseiflexus</taxon>
    </lineage>
</organism>